<protein>
    <recommendedName>
        <fullName>Protoheme IX farnesyltransferase, mitochondrial</fullName>
        <ecNumber>2.5.1.-</ecNumber>
    </recommendedName>
    <alternativeName>
        <fullName>Heme O synthase</fullName>
    </alternativeName>
    <alternativeName>
        <fullName>Protoheme farnesyltransferase 1</fullName>
    </alternativeName>
</protein>
<keyword id="KW-0350">Heme biosynthesis</keyword>
<keyword id="KW-0472">Membrane</keyword>
<keyword id="KW-0496">Mitochondrion</keyword>
<keyword id="KW-1185">Reference proteome</keyword>
<keyword id="KW-0808">Transferase</keyword>
<keyword id="KW-0809">Transit peptide</keyword>
<keyword id="KW-0812">Transmembrane</keyword>
<keyword id="KW-1133">Transmembrane helix</keyword>
<name>COX10_NEUCR</name>
<gene>
    <name type="primary">pft-1</name>
    <name type="synonym">cox10</name>
    <name type="ORF">NCU06141</name>
</gene>
<comment type="function">
    <text evidence="1">Converts protoheme IX and farnesyl diphosphate to heme O.</text>
</comment>
<comment type="subcellular location">
    <subcellularLocation>
        <location evidence="1">Mitochondrion membrane</location>
        <topology evidence="1">Multi-pass membrane protein</topology>
    </subcellularLocation>
</comment>
<comment type="similarity">
    <text evidence="4">Belongs to the UbiA prenyltransferase family.</text>
</comment>
<dbReference type="EC" id="2.5.1.-"/>
<dbReference type="EMBL" id="CM002242">
    <property type="protein sequence ID" value="EAA30767.2"/>
    <property type="molecule type" value="Genomic_DNA"/>
</dbReference>
<dbReference type="RefSeq" id="XP_960003.2">
    <property type="nucleotide sequence ID" value="XM_954910.2"/>
</dbReference>
<dbReference type="SMR" id="Q7S5E7"/>
<dbReference type="FunCoup" id="Q7S5E7">
    <property type="interactions" value="786"/>
</dbReference>
<dbReference type="STRING" id="367110.Q7S5E7"/>
<dbReference type="PaxDb" id="5141-EFNCRP00000005348"/>
<dbReference type="EnsemblFungi" id="EAA30767">
    <property type="protein sequence ID" value="EAA30767"/>
    <property type="gene ID" value="NCU06141"/>
</dbReference>
<dbReference type="GeneID" id="3876125"/>
<dbReference type="KEGG" id="ncr:NCU06141"/>
<dbReference type="VEuPathDB" id="FungiDB:NCU06141"/>
<dbReference type="HOGENOM" id="CLU_029631_2_0_1"/>
<dbReference type="InParanoid" id="Q7S5E7"/>
<dbReference type="OrthoDB" id="5211at2759"/>
<dbReference type="Proteomes" id="UP000001805">
    <property type="component" value="Chromosome 7, Linkage Group VII"/>
</dbReference>
<dbReference type="GO" id="GO:0031966">
    <property type="term" value="C:mitochondrial membrane"/>
    <property type="evidence" value="ECO:0007669"/>
    <property type="project" value="UniProtKB-SubCell"/>
</dbReference>
<dbReference type="GO" id="GO:0005739">
    <property type="term" value="C:mitochondrion"/>
    <property type="evidence" value="ECO:0000318"/>
    <property type="project" value="GO_Central"/>
</dbReference>
<dbReference type="GO" id="GO:0008495">
    <property type="term" value="F:protoheme IX farnesyltransferase activity"/>
    <property type="evidence" value="ECO:0000318"/>
    <property type="project" value="GO_Central"/>
</dbReference>
<dbReference type="GO" id="GO:0006784">
    <property type="term" value="P:heme A biosynthetic process"/>
    <property type="evidence" value="ECO:0000318"/>
    <property type="project" value="GO_Central"/>
</dbReference>
<dbReference type="CDD" id="cd13957">
    <property type="entry name" value="PT_UbiA_Cox10"/>
    <property type="match status" value="1"/>
</dbReference>
<dbReference type="FunFam" id="1.10.357.140:FF:000004">
    <property type="entry name" value="Protoheme IX farnesyltransferase, mitochondrial"/>
    <property type="match status" value="1"/>
</dbReference>
<dbReference type="Gene3D" id="1.10.357.140">
    <property type="entry name" value="UbiA prenyltransferase"/>
    <property type="match status" value="1"/>
</dbReference>
<dbReference type="InterPro" id="IPR006369">
    <property type="entry name" value="Protohaem_IX_farnesylTrfase"/>
</dbReference>
<dbReference type="InterPro" id="IPR016315">
    <property type="entry name" value="Protohaem_IX_farnesylTrfase_mt"/>
</dbReference>
<dbReference type="InterPro" id="IPR000537">
    <property type="entry name" value="UbiA_prenyltransferase"/>
</dbReference>
<dbReference type="InterPro" id="IPR030470">
    <property type="entry name" value="UbiA_prenylTrfase_CS"/>
</dbReference>
<dbReference type="InterPro" id="IPR044878">
    <property type="entry name" value="UbiA_sf"/>
</dbReference>
<dbReference type="NCBIfam" id="TIGR01473">
    <property type="entry name" value="cyoE_ctaB"/>
    <property type="match status" value="1"/>
</dbReference>
<dbReference type="PANTHER" id="PTHR43448">
    <property type="entry name" value="PROTOHEME IX FARNESYLTRANSFERASE, MITOCHONDRIAL"/>
    <property type="match status" value="1"/>
</dbReference>
<dbReference type="PANTHER" id="PTHR43448:SF2">
    <property type="entry name" value="PROTOHEME IX FARNESYLTRANSFERASE, MITOCHONDRIAL"/>
    <property type="match status" value="1"/>
</dbReference>
<dbReference type="Pfam" id="PF01040">
    <property type="entry name" value="UbiA"/>
    <property type="match status" value="1"/>
</dbReference>
<dbReference type="PIRSF" id="PIRSF001773">
    <property type="entry name" value="COX10"/>
    <property type="match status" value="1"/>
</dbReference>
<dbReference type="PROSITE" id="PS00943">
    <property type="entry name" value="UBIA"/>
    <property type="match status" value="1"/>
</dbReference>
<evidence type="ECO:0000250" key="1"/>
<evidence type="ECO:0000255" key="2"/>
<evidence type="ECO:0000256" key="3">
    <source>
        <dbReference type="SAM" id="MobiDB-lite"/>
    </source>
</evidence>
<evidence type="ECO:0000305" key="4"/>
<feature type="transit peptide" description="Mitochondrion" evidence="2">
    <location>
        <begin position="1"/>
        <end position="23"/>
    </location>
</feature>
<feature type="chain" id="PRO_0000045419" description="Protoheme IX farnesyltransferase, mitochondrial">
    <location>
        <begin position="24"/>
        <end position="511"/>
    </location>
</feature>
<feature type="transmembrane region" description="Helical" evidence="2">
    <location>
        <begin position="168"/>
        <end position="188"/>
    </location>
</feature>
<feature type="transmembrane region" description="Helical" evidence="2">
    <location>
        <begin position="197"/>
        <end position="217"/>
    </location>
</feature>
<feature type="transmembrane region" description="Helical" evidence="2">
    <location>
        <begin position="253"/>
        <end position="273"/>
    </location>
</feature>
<feature type="transmembrane region" description="Helical" evidence="2">
    <location>
        <begin position="275"/>
        <end position="295"/>
    </location>
</feature>
<feature type="transmembrane region" description="Helical" evidence="2">
    <location>
        <begin position="303"/>
        <end position="323"/>
    </location>
</feature>
<feature type="transmembrane region" description="Helical" evidence="2">
    <location>
        <begin position="344"/>
        <end position="364"/>
    </location>
</feature>
<feature type="transmembrane region" description="Helical" evidence="2">
    <location>
        <begin position="398"/>
        <end position="418"/>
    </location>
</feature>
<feature type="transmembrane region" description="Helical" evidence="2">
    <location>
        <begin position="444"/>
        <end position="464"/>
    </location>
</feature>
<feature type="region of interest" description="Disordered" evidence="3">
    <location>
        <begin position="1"/>
        <end position="27"/>
    </location>
</feature>
<feature type="region of interest" description="Disordered" evidence="3">
    <location>
        <begin position="50"/>
        <end position="136"/>
    </location>
</feature>
<feature type="compositionally biased region" description="Low complexity" evidence="3">
    <location>
        <begin position="52"/>
        <end position="79"/>
    </location>
</feature>
<feature type="compositionally biased region" description="Low complexity" evidence="3">
    <location>
        <begin position="104"/>
        <end position="115"/>
    </location>
</feature>
<feature type="compositionally biased region" description="Low complexity" evidence="3">
    <location>
        <begin position="126"/>
        <end position="136"/>
    </location>
</feature>
<organism>
    <name type="scientific">Neurospora crassa (strain ATCC 24698 / 74-OR23-1A / CBS 708.71 / DSM 1257 / FGSC 987)</name>
    <dbReference type="NCBI Taxonomy" id="367110"/>
    <lineage>
        <taxon>Eukaryota</taxon>
        <taxon>Fungi</taxon>
        <taxon>Dikarya</taxon>
        <taxon>Ascomycota</taxon>
        <taxon>Pezizomycotina</taxon>
        <taxon>Sordariomycetes</taxon>
        <taxon>Sordariomycetidae</taxon>
        <taxon>Sordariales</taxon>
        <taxon>Sordariaceae</taxon>
        <taxon>Neurospora</taxon>
    </lineage>
</organism>
<reference key="1">
    <citation type="journal article" date="2003" name="Nature">
        <title>The genome sequence of the filamentous fungus Neurospora crassa.</title>
        <authorList>
            <person name="Galagan J.E."/>
            <person name="Calvo S.E."/>
            <person name="Borkovich K.A."/>
            <person name="Selker E.U."/>
            <person name="Read N.D."/>
            <person name="Jaffe D.B."/>
            <person name="FitzHugh W."/>
            <person name="Ma L.-J."/>
            <person name="Smirnov S."/>
            <person name="Purcell S."/>
            <person name="Rehman B."/>
            <person name="Elkins T."/>
            <person name="Engels R."/>
            <person name="Wang S."/>
            <person name="Nielsen C.B."/>
            <person name="Butler J."/>
            <person name="Endrizzi M."/>
            <person name="Qui D."/>
            <person name="Ianakiev P."/>
            <person name="Bell-Pedersen D."/>
            <person name="Nelson M.A."/>
            <person name="Werner-Washburne M."/>
            <person name="Selitrennikoff C.P."/>
            <person name="Kinsey J.A."/>
            <person name="Braun E.L."/>
            <person name="Zelter A."/>
            <person name="Schulte U."/>
            <person name="Kothe G.O."/>
            <person name="Jedd G."/>
            <person name="Mewes H.-W."/>
            <person name="Staben C."/>
            <person name="Marcotte E."/>
            <person name="Greenberg D."/>
            <person name="Roy A."/>
            <person name="Foley K."/>
            <person name="Naylor J."/>
            <person name="Stange-Thomann N."/>
            <person name="Barrett R."/>
            <person name="Gnerre S."/>
            <person name="Kamal M."/>
            <person name="Kamvysselis M."/>
            <person name="Mauceli E.W."/>
            <person name="Bielke C."/>
            <person name="Rudd S."/>
            <person name="Frishman D."/>
            <person name="Krystofova S."/>
            <person name="Rasmussen C."/>
            <person name="Metzenberg R.L."/>
            <person name="Perkins D.D."/>
            <person name="Kroken S."/>
            <person name="Cogoni C."/>
            <person name="Macino G."/>
            <person name="Catcheside D.E.A."/>
            <person name="Li W."/>
            <person name="Pratt R.J."/>
            <person name="Osmani S.A."/>
            <person name="DeSouza C.P.C."/>
            <person name="Glass N.L."/>
            <person name="Orbach M.J."/>
            <person name="Berglund J.A."/>
            <person name="Voelker R."/>
            <person name="Yarden O."/>
            <person name="Plamann M."/>
            <person name="Seiler S."/>
            <person name="Dunlap J.C."/>
            <person name="Radford A."/>
            <person name="Aramayo R."/>
            <person name="Natvig D.O."/>
            <person name="Alex L.A."/>
            <person name="Mannhaupt G."/>
            <person name="Ebbole D.J."/>
            <person name="Freitag M."/>
            <person name="Paulsen I."/>
            <person name="Sachs M.S."/>
            <person name="Lander E.S."/>
            <person name="Nusbaum C."/>
            <person name="Birren B.W."/>
        </authorList>
    </citation>
    <scope>NUCLEOTIDE SEQUENCE [LARGE SCALE GENOMIC DNA]</scope>
    <source>
        <strain>ATCC 24698 / 74-OR23-1A / CBS 708.71 / DSM 1257 / FGSC 987</strain>
    </source>
</reference>
<proteinExistence type="inferred from homology"/>
<accession>Q7S5E7</accession>
<sequence>MSSSTESLPGTLRRTLTTSRAPAATSSQRLKAGYFVSNAFLPRVKANGIHDSASSQRSTTVASTTSTTADAADGSSSTTQPTTAADLPPVDNTLLPHRRRQAQRKAAAAAAAAAANGETPTPLINPDAPTADLAPDASSQLAAAAASAPADSLKRRLSSLLSLSKPRLTVLVVLSAMVPYALYPVPSFLTSSALDTSLAPSLSPLTLLFLTTGTTLCSASANALNMLYEPDTDSKMTRTRTRPLVRRLLTTKAAVLFAVGCGLAGTLALYFGVNPTVSFLGAANIALYAGAYTPLKRISAVNTWVGAIVGGIPPLMGWAAAAGESATGDGTWRELLFASDGSSLGGWLFAGLLFAWQFPHFMPLSWGIRHEYKAAGLRMLAWTNPARNGRVALRYSLAFIPLCVGLSATGVTEWSFAVTSLPVNAWLVWEAIKFWRLEGHKGSARGLFWASVWHLPVIMVLALAQKKGMWGRVWRSVFGEPEEEEGEWVYEDEDEEEGGGVGEVVKGVVKK</sequence>